<evidence type="ECO:0000255" key="1">
    <source>
        <dbReference type="HAMAP-Rule" id="MF_01522"/>
    </source>
</evidence>
<organism>
    <name type="scientific">Escherichia coli (strain SE11)</name>
    <dbReference type="NCBI Taxonomy" id="409438"/>
    <lineage>
        <taxon>Bacteria</taxon>
        <taxon>Pseudomonadati</taxon>
        <taxon>Pseudomonadota</taxon>
        <taxon>Gammaproteobacteria</taxon>
        <taxon>Enterobacterales</taxon>
        <taxon>Enterobacteriaceae</taxon>
        <taxon>Escherichia</taxon>
    </lineage>
</organism>
<gene>
    <name evidence="1" type="primary">kup</name>
    <name type="ordered locus">ECSE_4037</name>
</gene>
<keyword id="KW-0997">Cell inner membrane</keyword>
<keyword id="KW-1003">Cell membrane</keyword>
<keyword id="KW-0406">Ion transport</keyword>
<keyword id="KW-0472">Membrane</keyword>
<keyword id="KW-0630">Potassium</keyword>
<keyword id="KW-0633">Potassium transport</keyword>
<keyword id="KW-0769">Symport</keyword>
<keyword id="KW-0812">Transmembrane</keyword>
<keyword id="KW-1133">Transmembrane helix</keyword>
<keyword id="KW-0813">Transport</keyword>
<comment type="function">
    <text evidence="1">Responsible for the low-affinity transport of potassium into the cell. Likely operates as a K(+):H(+) symporter.</text>
</comment>
<comment type="catalytic activity">
    <reaction evidence="1">
        <text>K(+)(in) + H(+)(in) = K(+)(out) + H(+)(out)</text>
        <dbReference type="Rhea" id="RHEA:28490"/>
        <dbReference type="ChEBI" id="CHEBI:15378"/>
        <dbReference type="ChEBI" id="CHEBI:29103"/>
    </reaction>
    <physiologicalReaction direction="right-to-left" evidence="1">
        <dbReference type="Rhea" id="RHEA:28492"/>
    </physiologicalReaction>
</comment>
<comment type="subcellular location">
    <subcellularLocation>
        <location evidence="1">Cell inner membrane</location>
        <topology evidence="1">Multi-pass membrane protein</topology>
    </subcellularLocation>
</comment>
<comment type="similarity">
    <text evidence="1">Belongs to the HAK/KUP transporter (TC 2.A.72) family.</text>
</comment>
<protein>
    <recommendedName>
        <fullName evidence="1">Low affinity potassium transport system protein Kup</fullName>
    </recommendedName>
    <alternativeName>
        <fullName evidence="1">Kup system potassium uptake protein</fullName>
    </alternativeName>
</protein>
<accession>B6I3Y4</accession>
<reference key="1">
    <citation type="journal article" date="2008" name="DNA Res.">
        <title>Complete genome sequence and comparative analysis of the wild-type commensal Escherichia coli strain SE11 isolated from a healthy adult.</title>
        <authorList>
            <person name="Oshima K."/>
            <person name="Toh H."/>
            <person name="Ogura Y."/>
            <person name="Sasamoto H."/>
            <person name="Morita H."/>
            <person name="Park S.-H."/>
            <person name="Ooka T."/>
            <person name="Iyoda S."/>
            <person name="Taylor T.D."/>
            <person name="Hayashi T."/>
            <person name="Itoh K."/>
            <person name="Hattori M."/>
        </authorList>
    </citation>
    <scope>NUCLEOTIDE SEQUENCE [LARGE SCALE GENOMIC DNA]</scope>
    <source>
        <strain>SE11</strain>
    </source>
</reference>
<feature type="chain" id="PRO_1000190263" description="Low affinity potassium transport system protein Kup">
    <location>
        <begin position="1"/>
        <end position="622"/>
    </location>
</feature>
<feature type="transmembrane region" description="Helical" evidence="1">
    <location>
        <begin position="9"/>
        <end position="29"/>
    </location>
</feature>
<feature type="transmembrane region" description="Helical" evidence="1">
    <location>
        <begin position="49"/>
        <end position="69"/>
    </location>
</feature>
<feature type="transmembrane region" description="Helical" evidence="1">
    <location>
        <begin position="103"/>
        <end position="123"/>
    </location>
</feature>
<feature type="transmembrane region" description="Helical" evidence="1">
    <location>
        <begin position="137"/>
        <end position="157"/>
    </location>
</feature>
<feature type="transmembrane region" description="Helical" evidence="1">
    <location>
        <begin position="165"/>
        <end position="185"/>
    </location>
</feature>
<feature type="transmembrane region" description="Helical" evidence="1">
    <location>
        <begin position="213"/>
        <end position="233"/>
    </location>
</feature>
<feature type="transmembrane region" description="Helical" evidence="1">
    <location>
        <begin position="247"/>
        <end position="267"/>
    </location>
</feature>
<feature type="transmembrane region" description="Helical" evidence="1">
    <location>
        <begin position="276"/>
        <end position="296"/>
    </location>
</feature>
<feature type="transmembrane region" description="Helical" evidence="1">
    <location>
        <begin position="337"/>
        <end position="357"/>
    </location>
</feature>
<feature type="transmembrane region" description="Helical" evidence="1">
    <location>
        <begin position="363"/>
        <end position="383"/>
    </location>
</feature>
<feature type="transmembrane region" description="Helical" evidence="1">
    <location>
        <begin position="396"/>
        <end position="416"/>
    </location>
</feature>
<feature type="transmembrane region" description="Helical" evidence="1">
    <location>
        <begin position="419"/>
        <end position="439"/>
    </location>
</feature>
<dbReference type="EMBL" id="AP009240">
    <property type="protein sequence ID" value="BAG79561.1"/>
    <property type="molecule type" value="Genomic_DNA"/>
</dbReference>
<dbReference type="RefSeq" id="WP_000102319.1">
    <property type="nucleotide sequence ID" value="NC_011415.1"/>
</dbReference>
<dbReference type="GeneID" id="75205465"/>
<dbReference type="KEGG" id="ecy:ECSE_4037"/>
<dbReference type="HOGENOM" id="CLU_008142_4_2_6"/>
<dbReference type="Proteomes" id="UP000008199">
    <property type="component" value="Chromosome"/>
</dbReference>
<dbReference type="GO" id="GO:0005886">
    <property type="term" value="C:plasma membrane"/>
    <property type="evidence" value="ECO:0007669"/>
    <property type="project" value="UniProtKB-SubCell"/>
</dbReference>
<dbReference type="GO" id="GO:0015079">
    <property type="term" value="F:potassium ion transmembrane transporter activity"/>
    <property type="evidence" value="ECO:0007669"/>
    <property type="project" value="UniProtKB-UniRule"/>
</dbReference>
<dbReference type="GO" id="GO:0015293">
    <property type="term" value="F:symporter activity"/>
    <property type="evidence" value="ECO:0007669"/>
    <property type="project" value="UniProtKB-UniRule"/>
</dbReference>
<dbReference type="HAMAP" id="MF_01522">
    <property type="entry name" value="Kup"/>
    <property type="match status" value="1"/>
</dbReference>
<dbReference type="InterPro" id="IPR003855">
    <property type="entry name" value="K+_transporter"/>
</dbReference>
<dbReference type="InterPro" id="IPR053952">
    <property type="entry name" value="K_trans_C"/>
</dbReference>
<dbReference type="InterPro" id="IPR053951">
    <property type="entry name" value="K_trans_N"/>
</dbReference>
<dbReference type="InterPro" id="IPR023051">
    <property type="entry name" value="Kup"/>
</dbReference>
<dbReference type="NCBIfam" id="TIGR00794">
    <property type="entry name" value="kup"/>
    <property type="match status" value="1"/>
</dbReference>
<dbReference type="NCBIfam" id="NF008015">
    <property type="entry name" value="PRK10745.1"/>
    <property type="match status" value="1"/>
</dbReference>
<dbReference type="PANTHER" id="PTHR30540:SF79">
    <property type="entry name" value="LOW AFFINITY POTASSIUM TRANSPORT SYSTEM PROTEIN KUP"/>
    <property type="match status" value="1"/>
</dbReference>
<dbReference type="PANTHER" id="PTHR30540">
    <property type="entry name" value="OSMOTIC STRESS POTASSIUM TRANSPORTER"/>
    <property type="match status" value="1"/>
</dbReference>
<dbReference type="Pfam" id="PF02705">
    <property type="entry name" value="K_trans"/>
    <property type="match status" value="1"/>
</dbReference>
<dbReference type="Pfam" id="PF22776">
    <property type="entry name" value="K_trans_C"/>
    <property type="match status" value="1"/>
</dbReference>
<name>KUP_ECOSE</name>
<sequence>MSTDNKQSLPAITLAAIGVVYGDIGTSPLYTLRECLSGQFGFGVERDAVFGFLSLIFWLLIFVVSIKYLTFVMRADNAGEGGILTLMSLAGRNTSARTTSMLVIMGLIGGSFFYGEVVITPAISVMSAIEGLEIVAPQLDTWIVPLSIIVLTLLFMIQKHGTAMVGKLFAPIMLTWFLILAGLGLRSIIANPEVLHALNPMWAVHFFLEYKTVSFIALGAVVLSITGVEALYADMGHFGKFPIRLAWFTVVLPSLTLNYFGQGALLLKNPEAIKNPFFLLAPDWALIPLLIIAALATVIASQAVISGVFSLTRQAVRLGYLSPMRIIHTSEMESGQIYIPFVNWMLYVAVVIVIVSFEHSSNLAAAYGIAVTGTMVLTSILSTTVARQNWHWNKYFVALILIAFLCVDIPLFTANLDKLLSGGWLPLSLGTVMFIVMTTWKSERFRLLRRMHEHGNSLEAMIASLEKSPPVRVPGTAVYMSRAINVIPFALMHNLKHNKVLHERVILLTLRTEDAPYVHNVRRVQIEQLSPTFWRVVASYGWRETPNVEEVFHRCGLEGLSCRMMETSFFMSHESLILGKRPWYLRLRGKLYLLLQRNALRAPDQFEIPPNRVIELGTQVEI</sequence>
<proteinExistence type="inferred from homology"/>